<accession>Q08BD8</accession>
<sequence>MSLLEDIVDLLKCVLEYFGVPPDMLVPVWESTHCGQYRSLVRMIGTNLPLSPYPRLRFQIPLQTFNKHSHIDVSVDSPAIPTLADVLWLVEDEGDSHTKFRNAVPLRKKCVPHGYETPSLGSVSVKAQRGGGVLAQSTQPDALLKISALEEELQRLRAQIATIITAPAGPVVSPTDPGTPCSAPKPAPVLTSTPVCPPPPPPPPPPAMPTRTEVSMSEMIQQRQAAKKETLAQCGPSLTTAPSMLEVLRDLNQVKLRSVERSPGGTPIRRRRSKGVACSSDPAALIAEALKRKFAHRQRDDSFGKENHSAEPSPFSSPDTPRIFQHTRRSQGRIHL</sequence>
<name>MTRF2_DANRE</name>
<dbReference type="EMBL" id="BX927210">
    <property type="status" value="NOT_ANNOTATED_CDS"/>
    <property type="molecule type" value="Genomic_DNA"/>
</dbReference>
<dbReference type="EMBL" id="BC124770">
    <property type="protein sequence ID" value="AAI24771.1"/>
    <property type="molecule type" value="mRNA"/>
</dbReference>
<dbReference type="RefSeq" id="NP_001070753.1">
    <property type="nucleotide sequence ID" value="NM_001077285.1"/>
</dbReference>
<dbReference type="RefSeq" id="XP_068072906.1">
    <property type="nucleotide sequence ID" value="XM_068216805.1"/>
</dbReference>
<dbReference type="SMR" id="Q08BD8"/>
<dbReference type="FunCoup" id="Q08BD8">
    <property type="interactions" value="657"/>
</dbReference>
<dbReference type="STRING" id="7955.ENSDARP00000079489"/>
<dbReference type="PaxDb" id="7955-ENSDARP00000079489"/>
<dbReference type="Ensembl" id="ENSDART00000085054">
    <property type="protein sequence ID" value="ENSDARP00000079489"/>
    <property type="gene ID" value="ENSDARG00000060394"/>
</dbReference>
<dbReference type="GeneID" id="768141"/>
<dbReference type="KEGG" id="dre:768141"/>
<dbReference type="AGR" id="ZFIN:ZDB-GENE-061013-398"/>
<dbReference type="CTD" id="113115"/>
<dbReference type="ZFIN" id="ZDB-GENE-061013-398">
    <property type="gene designation" value="mtfr2"/>
</dbReference>
<dbReference type="eggNOG" id="ENOG502QUU8">
    <property type="taxonomic scope" value="Eukaryota"/>
</dbReference>
<dbReference type="HOGENOM" id="CLU_059135_0_0_1"/>
<dbReference type="InParanoid" id="Q08BD8"/>
<dbReference type="OMA" id="VCQKKEY"/>
<dbReference type="OrthoDB" id="2133332at2759"/>
<dbReference type="PhylomeDB" id="Q08BD8"/>
<dbReference type="TreeFam" id="TF331404"/>
<dbReference type="PRO" id="PR:Q08BD8"/>
<dbReference type="Proteomes" id="UP000000437">
    <property type="component" value="Chromosome 23"/>
</dbReference>
<dbReference type="Bgee" id="ENSDARG00000060394">
    <property type="expression patterns" value="Expressed in early embryo and 41 other cell types or tissues"/>
</dbReference>
<dbReference type="ExpressionAtlas" id="Q08BD8">
    <property type="expression patterns" value="baseline and differential"/>
</dbReference>
<dbReference type="GO" id="GO:0005739">
    <property type="term" value="C:mitochondrion"/>
    <property type="evidence" value="ECO:0000318"/>
    <property type="project" value="GO_Central"/>
</dbReference>
<dbReference type="GO" id="GO:0009060">
    <property type="term" value="P:aerobic respiration"/>
    <property type="evidence" value="ECO:0000318"/>
    <property type="project" value="GO_Central"/>
</dbReference>
<dbReference type="GO" id="GO:0000266">
    <property type="term" value="P:mitochondrial fission"/>
    <property type="evidence" value="ECO:0000318"/>
    <property type="project" value="GO_Central"/>
</dbReference>
<dbReference type="InterPro" id="IPR007972">
    <property type="entry name" value="Mtfr1"/>
</dbReference>
<dbReference type="PANTHER" id="PTHR14215:SF2">
    <property type="entry name" value="MITOCHONDRIAL FISSION REGULATOR 2"/>
    <property type="match status" value="1"/>
</dbReference>
<dbReference type="PANTHER" id="PTHR14215">
    <property type="entry name" value="PROTEIN OF UNKNOWN FUNCTION DUF729"/>
    <property type="match status" value="1"/>
</dbReference>
<dbReference type="Pfam" id="PF05308">
    <property type="entry name" value="Mito_fiss_reg"/>
    <property type="match status" value="1"/>
</dbReference>
<keyword id="KW-0175">Coiled coil</keyword>
<keyword id="KW-0496">Mitochondrion</keyword>
<keyword id="KW-1185">Reference proteome</keyword>
<proteinExistence type="evidence at transcript level"/>
<reference key="1">
    <citation type="journal article" date="2013" name="Nature">
        <title>The zebrafish reference genome sequence and its relationship to the human genome.</title>
        <authorList>
            <person name="Howe K."/>
            <person name="Clark M.D."/>
            <person name="Torroja C.F."/>
            <person name="Torrance J."/>
            <person name="Berthelot C."/>
            <person name="Muffato M."/>
            <person name="Collins J.E."/>
            <person name="Humphray S."/>
            <person name="McLaren K."/>
            <person name="Matthews L."/>
            <person name="McLaren S."/>
            <person name="Sealy I."/>
            <person name="Caccamo M."/>
            <person name="Churcher C."/>
            <person name="Scott C."/>
            <person name="Barrett J.C."/>
            <person name="Koch R."/>
            <person name="Rauch G.J."/>
            <person name="White S."/>
            <person name="Chow W."/>
            <person name="Kilian B."/>
            <person name="Quintais L.T."/>
            <person name="Guerra-Assuncao J.A."/>
            <person name="Zhou Y."/>
            <person name="Gu Y."/>
            <person name="Yen J."/>
            <person name="Vogel J.H."/>
            <person name="Eyre T."/>
            <person name="Redmond S."/>
            <person name="Banerjee R."/>
            <person name="Chi J."/>
            <person name="Fu B."/>
            <person name="Langley E."/>
            <person name="Maguire S.F."/>
            <person name="Laird G.K."/>
            <person name="Lloyd D."/>
            <person name="Kenyon E."/>
            <person name="Donaldson S."/>
            <person name="Sehra H."/>
            <person name="Almeida-King J."/>
            <person name="Loveland J."/>
            <person name="Trevanion S."/>
            <person name="Jones M."/>
            <person name="Quail M."/>
            <person name="Willey D."/>
            <person name="Hunt A."/>
            <person name="Burton J."/>
            <person name="Sims S."/>
            <person name="McLay K."/>
            <person name="Plumb B."/>
            <person name="Davis J."/>
            <person name="Clee C."/>
            <person name="Oliver K."/>
            <person name="Clark R."/>
            <person name="Riddle C."/>
            <person name="Elliot D."/>
            <person name="Threadgold G."/>
            <person name="Harden G."/>
            <person name="Ware D."/>
            <person name="Begum S."/>
            <person name="Mortimore B."/>
            <person name="Kerry G."/>
            <person name="Heath P."/>
            <person name="Phillimore B."/>
            <person name="Tracey A."/>
            <person name="Corby N."/>
            <person name="Dunn M."/>
            <person name="Johnson C."/>
            <person name="Wood J."/>
            <person name="Clark S."/>
            <person name="Pelan S."/>
            <person name="Griffiths G."/>
            <person name="Smith M."/>
            <person name="Glithero R."/>
            <person name="Howden P."/>
            <person name="Barker N."/>
            <person name="Lloyd C."/>
            <person name="Stevens C."/>
            <person name="Harley J."/>
            <person name="Holt K."/>
            <person name="Panagiotidis G."/>
            <person name="Lovell J."/>
            <person name="Beasley H."/>
            <person name="Henderson C."/>
            <person name="Gordon D."/>
            <person name="Auger K."/>
            <person name="Wright D."/>
            <person name="Collins J."/>
            <person name="Raisen C."/>
            <person name="Dyer L."/>
            <person name="Leung K."/>
            <person name="Robertson L."/>
            <person name="Ambridge K."/>
            <person name="Leongamornlert D."/>
            <person name="McGuire S."/>
            <person name="Gilderthorp R."/>
            <person name="Griffiths C."/>
            <person name="Manthravadi D."/>
            <person name="Nichol S."/>
            <person name="Barker G."/>
            <person name="Whitehead S."/>
            <person name="Kay M."/>
            <person name="Brown J."/>
            <person name="Murnane C."/>
            <person name="Gray E."/>
            <person name="Humphries M."/>
            <person name="Sycamore N."/>
            <person name="Barker D."/>
            <person name="Saunders D."/>
            <person name="Wallis J."/>
            <person name="Babbage A."/>
            <person name="Hammond S."/>
            <person name="Mashreghi-Mohammadi M."/>
            <person name="Barr L."/>
            <person name="Martin S."/>
            <person name="Wray P."/>
            <person name="Ellington A."/>
            <person name="Matthews N."/>
            <person name="Ellwood M."/>
            <person name="Woodmansey R."/>
            <person name="Clark G."/>
            <person name="Cooper J."/>
            <person name="Tromans A."/>
            <person name="Grafham D."/>
            <person name="Skuce C."/>
            <person name="Pandian R."/>
            <person name="Andrews R."/>
            <person name="Harrison E."/>
            <person name="Kimberley A."/>
            <person name="Garnett J."/>
            <person name="Fosker N."/>
            <person name="Hall R."/>
            <person name="Garner P."/>
            <person name="Kelly D."/>
            <person name="Bird C."/>
            <person name="Palmer S."/>
            <person name="Gehring I."/>
            <person name="Berger A."/>
            <person name="Dooley C.M."/>
            <person name="Ersan-Urun Z."/>
            <person name="Eser C."/>
            <person name="Geiger H."/>
            <person name="Geisler M."/>
            <person name="Karotki L."/>
            <person name="Kirn A."/>
            <person name="Konantz J."/>
            <person name="Konantz M."/>
            <person name="Oberlander M."/>
            <person name="Rudolph-Geiger S."/>
            <person name="Teucke M."/>
            <person name="Lanz C."/>
            <person name="Raddatz G."/>
            <person name="Osoegawa K."/>
            <person name="Zhu B."/>
            <person name="Rapp A."/>
            <person name="Widaa S."/>
            <person name="Langford C."/>
            <person name="Yang F."/>
            <person name="Schuster S.C."/>
            <person name="Carter N.P."/>
            <person name="Harrow J."/>
            <person name="Ning Z."/>
            <person name="Herrero J."/>
            <person name="Searle S.M."/>
            <person name="Enright A."/>
            <person name="Geisler R."/>
            <person name="Plasterk R.H."/>
            <person name="Lee C."/>
            <person name="Westerfield M."/>
            <person name="de Jong P.J."/>
            <person name="Zon L.I."/>
            <person name="Postlethwait J.H."/>
            <person name="Nusslein-Volhard C."/>
            <person name="Hubbard T.J."/>
            <person name="Roest Crollius H."/>
            <person name="Rogers J."/>
            <person name="Stemple D.L."/>
        </authorList>
    </citation>
    <scope>NUCLEOTIDE SEQUENCE [LARGE SCALE GENOMIC DNA]</scope>
    <source>
        <strain>Tuebingen</strain>
    </source>
</reference>
<reference key="2">
    <citation type="submission" date="2006-10" db="EMBL/GenBank/DDBJ databases">
        <authorList>
            <consortium name="NIH - Zebrafish Gene Collection (ZGC) project"/>
        </authorList>
    </citation>
    <scope>NUCLEOTIDE SEQUENCE [LARGE SCALE MRNA]</scope>
</reference>
<feature type="chain" id="PRO_0000417560" description="Mitochondrial fission regulator 2">
    <location>
        <begin position="1"/>
        <end position="336"/>
    </location>
</feature>
<feature type="region of interest" description="Disordered" evidence="3">
    <location>
        <begin position="296"/>
        <end position="336"/>
    </location>
</feature>
<feature type="coiled-coil region" evidence="2">
    <location>
        <begin position="139"/>
        <end position="166"/>
    </location>
</feature>
<feature type="compositionally biased region" description="Basic and acidic residues" evidence="3">
    <location>
        <begin position="297"/>
        <end position="309"/>
    </location>
</feature>
<feature type="compositionally biased region" description="Basic residues" evidence="3">
    <location>
        <begin position="325"/>
        <end position="336"/>
    </location>
</feature>
<evidence type="ECO:0000250" key="1"/>
<evidence type="ECO:0000255" key="2"/>
<evidence type="ECO:0000256" key="3">
    <source>
        <dbReference type="SAM" id="MobiDB-lite"/>
    </source>
</evidence>
<evidence type="ECO:0000305" key="4"/>
<protein>
    <recommendedName>
        <fullName>Mitochondrial fission regulator 2</fullName>
    </recommendedName>
</protein>
<comment type="function">
    <text evidence="1">May play a role in mitochondrial aerobic respiration. Can also promote mitochondrial fission (By similarity).</text>
</comment>
<comment type="subcellular location">
    <subcellularLocation>
        <location evidence="1">Mitochondrion</location>
    </subcellularLocation>
</comment>
<comment type="similarity">
    <text evidence="4">Belongs to the MTFR1 family.</text>
</comment>
<organism>
    <name type="scientific">Danio rerio</name>
    <name type="common">Zebrafish</name>
    <name type="synonym">Brachydanio rerio</name>
    <dbReference type="NCBI Taxonomy" id="7955"/>
    <lineage>
        <taxon>Eukaryota</taxon>
        <taxon>Metazoa</taxon>
        <taxon>Chordata</taxon>
        <taxon>Craniata</taxon>
        <taxon>Vertebrata</taxon>
        <taxon>Euteleostomi</taxon>
        <taxon>Actinopterygii</taxon>
        <taxon>Neopterygii</taxon>
        <taxon>Teleostei</taxon>
        <taxon>Ostariophysi</taxon>
        <taxon>Cypriniformes</taxon>
        <taxon>Danionidae</taxon>
        <taxon>Danioninae</taxon>
        <taxon>Danio</taxon>
    </lineage>
</organism>
<gene>
    <name type="primary">mtfr2</name>
    <name type="synonym">fam54a</name>
    <name type="ORF">zgc:153910</name>
</gene>